<reference key="1">
    <citation type="journal article" date="2005" name="J. Bacteriol.">
        <title>Insights on evolution of virulence and resistance from the complete genome analysis of an early methicillin-resistant Staphylococcus aureus strain and a biofilm-producing methicillin-resistant Staphylococcus epidermidis strain.</title>
        <authorList>
            <person name="Gill S.R."/>
            <person name="Fouts D.E."/>
            <person name="Archer G.L."/>
            <person name="Mongodin E.F."/>
            <person name="DeBoy R.T."/>
            <person name="Ravel J."/>
            <person name="Paulsen I.T."/>
            <person name="Kolonay J.F."/>
            <person name="Brinkac L.M."/>
            <person name="Beanan M.J."/>
            <person name="Dodson R.J."/>
            <person name="Daugherty S.C."/>
            <person name="Madupu R."/>
            <person name="Angiuoli S.V."/>
            <person name="Durkin A.S."/>
            <person name="Haft D.H."/>
            <person name="Vamathevan J.J."/>
            <person name="Khouri H."/>
            <person name="Utterback T.R."/>
            <person name="Lee C."/>
            <person name="Dimitrov G."/>
            <person name="Jiang L."/>
            <person name="Qin H."/>
            <person name="Weidman J."/>
            <person name="Tran K."/>
            <person name="Kang K.H."/>
            <person name="Hance I.R."/>
            <person name="Nelson K.E."/>
            <person name="Fraser C.M."/>
        </authorList>
    </citation>
    <scope>NUCLEOTIDE SEQUENCE [LARGE SCALE GENOMIC DNA]</scope>
    <source>
        <strain>COL</strain>
    </source>
</reference>
<comment type="catalytic activity">
    <reaction evidence="1">
        <text>uridine + ATP = UMP + ADP + H(+)</text>
        <dbReference type="Rhea" id="RHEA:16825"/>
        <dbReference type="ChEBI" id="CHEBI:15378"/>
        <dbReference type="ChEBI" id="CHEBI:16704"/>
        <dbReference type="ChEBI" id="CHEBI:30616"/>
        <dbReference type="ChEBI" id="CHEBI:57865"/>
        <dbReference type="ChEBI" id="CHEBI:456216"/>
        <dbReference type="EC" id="2.7.1.48"/>
    </reaction>
</comment>
<comment type="catalytic activity">
    <reaction evidence="1">
        <text>cytidine + ATP = CMP + ADP + H(+)</text>
        <dbReference type="Rhea" id="RHEA:24674"/>
        <dbReference type="ChEBI" id="CHEBI:15378"/>
        <dbReference type="ChEBI" id="CHEBI:17562"/>
        <dbReference type="ChEBI" id="CHEBI:30616"/>
        <dbReference type="ChEBI" id="CHEBI:60377"/>
        <dbReference type="ChEBI" id="CHEBI:456216"/>
        <dbReference type="EC" id="2.7.1.48"/>
    </reaction>
</comment>
<comment type="pathway">
    <text evidence="1">Pyrimidine metabolism; CTP biosynthesis via salvage pathway; CTP from cytidine: step 1/3.</text>
</comment>
<comment type="pathway">
    <text evidence="1">Pyrimidine metabolism; UMP biosynthesis via salvage pathway; UMP from uridine: step 1/1.</text>
</comment>
<comment type="subcellular location">
    <subcellularLocation>
        <location evidence="1">Cytoplasm</location>
    </subcellularLocation>
</comment>
<comment type="similarity">
    <text evidence="1">Belongs to the uridine kinase family.</text>
</comment>
<dbReference type="EC" id="2.7.1.48" evidence="1"/>
<dbReference type="EMBL" id="CP000046">
    <property type="protein sequence ID" value="AAW38282.1"/>
    <property type="molecule type" value="Genomic_DNA"/>
</dbReference>
<dbReference type="RefSeq" id="WP_000648617.1">
    <property type="nucleotide sequence ID" value="NZ_JBGOFO010000003.1"/>
</dbReference>
<dbReference type="SMR" id="Q5HFF1"/>
<dbReference type="KEGG" id="sac:SACOL1666"/>
<dbReference type="HOGENOM" id="CLU_021278_1_2_9"/>
<dbReference type="UniPathway" id="UPA00574">
    <property type="reaction ID" value="UER00637"/>
</dbReference>
<dbReference type="UniPathway" id="UPA00579">
    <property type="reaction ID" value="UER00640"/>
</dbReference>
<dbReference type="Proteomes" id="UP000000530">
    <property type="component" value="Chromosome"/>
</dbReference>
<dbReference type="GO" id="GO:0005737">
    <property type="term" value="C:cytoplasm"/>
    <property type="evidence" value="ECO:0007669"/>
    <property type="project" value="UniProtKB-SubCell"/>
</dbReference>
<dbReference type="GO" id="GO:0005524">
    <property type="term" value="F:ATP binding"/>
    <property type="evidence" value="ECO:0007669"/>
    <property type="project" value="UniProtKB-UniRule"/>
</dbReference>
<dbReference type="GO" id="GO:0043771">
    <property type="term" value="F:cytidine kinase activity"/>
    <property type="evidence" value="ECO:0007669"/>
    <property type="project" value="RHEA"/>
</dbReference>
<dbReference type="GO" id="GO:0004849">
    <property type="term" value="F:uridine kinase activity"/>
    <property type="evidence" value="ECO:0007669"/>
    <property type="project" value="UniProtKB-UniRule"/>
</dbReference>
<dbReference type="GO" id="GO:0044211">
    <property type="term" value="P:CTP salvage"/>
    <property type="evidence" value="ECO:0007669"/>
    <property type="project" value="UniProtKB-UniRule"/>
</dbReference>
<dbReference type="GO" id="GO:0044206">
    <property type="term" value="P:UMP salvage"/>
    <property type="evidence" value="ECO:0007669"/>
    <property type="project" value="UniProtKB-UniRule"/>
</dbReference>
<dbReference type="CDD" id="cd02023">
    <property type="entry name" value="UMPK"/>
    <property type="match status" value="1"/>
</dbReference>
<dbReference type="Gene3D" id="3.40.50.300">
    <property type="entry name" value="P-loop containing nucleotide triphosphate hydrolases"/>
    <property type="match status" value="1"/>
</dbReference>
<dbReference type="HAMAP" id="MF_00551">
    <property type="entry name" value="Uridine_kinase"/>
    <property type="match status" value="1"/>
</dbReference>
<dbReference type="InterPro" id="IPR027417">
    <property type="entry name" value="P-loop_NTPase"/>
</dbReference>
<dbReference type="InterPro" id="IPR006083">
    <property type="entry name" value="PRK/URK"/>
</dbReference>
<dbReference type="InterPro" id="IPR026008">
    <property type="entry name" value="Uridine_kinase"/>
</dbReference>
<dbReference type="InterPro" id="IPR000764">
    <property type="entry name" value="Uridine_kinase-like"/>
</dbReference>
<dbReference type="NCBIfam" id="NF004018">
    <property type="entry name" value="PRK05480.1"/>
    <property type="match status" value="1"/>
</dbReference>
<dbReference type="NCBIfam" id="TIGR00235">
    <property type="entry name" value="udk"/>
    <property type="match status" value="1"/>
</dbReference>
<dbReference type="PANTHER" id="PTHR10285">
    <property type="entry name" value="URIDINE KINASE"/>
    <property type="match status" value="1"/>
</dbReference>
<dbReference type="Pfam" id="PF00485">
    <property type="entry name" value="PRK"/>
    <property type="match status" value="1"/>
</dbReference>
<dbReference type="PRINTS" id="PR00988">
    <property type="entry name" value="URIDINKINASE"/>
</dbReference>
<dbReference type="SUPFAM" id="SSF52540">
    <property type="entry name" value="P-loop containing nucleoside triphosphate hydrolases"/>
    <property type="match status" value="1"/>
</dbReference>
<sequence>MKATTIIGIAGGSGSGKTTVTNEIMKNLEGHSVALLAQDYYYKDQKHLTFDERLETNYDHPFAFDNDLLIENLKDLKNGKAVEVPTYDYASHTRSDITIDFKPKDVIIVEGIFALENKVLRDMMDVKIYVDTDADLRILRRLTRDTKERGRSMDSVINQYLSVVRPMHDQFIEPTKKYADIIIPEGGSNKVAIDIMTTKIQSLVSKQ</sequence>
<accession>Q5HFF1</accession>
<gene>
    <name evidence="1" type="primary">udk</name>
    <name type="ordered locus">SACOL1666</name>
</gene>
<protein>
    <recommendedName>
        <fullName evidence="1">Uridine kinase</fullName>
        <ecNumber evidence="1">2.7.1.48</ecNumber>
    </recommendedName>
    <alternativeName>
        <fullName evidence="1">Cytidine monophosphokinase</fullName>
    </alternativeName>
    <alternativeName>
        <fullName evidence="1">Uridine monophosphokinase</fullName>
    </alternativeName>
</protein>
<proteinExistence type="inferred from homology"/>
<evidence type="ECO:0000255" key="1">
    <source>
        <dbReference type="HAMAP-Rule" id="MF_00551"/>
    </source>
</evidence>
<organism>
    <name type="scientific">Staphylococcus aureus (strain COL)</name>
    <dbReference type="NCBI Taxonomy" id="93062"/>
    <lineage>
        <taxon>Bacteria</taxon>
        <taxon>Bacillati</taxon>
        <taxon>Bacillota</taxon>
        <taxon>Bacilli</taxon>
        <taxon>Bacillales</taxon>
        <taxon>Staphylococcaceae</taxon>
        <taxon>Staphylococcus</taxon>
    </lineage>
</organism>
<name>URK_STAAC</name>
<keyword id="KW-0067">ATP-binding</keyword>
<keyword id="KW-0963">Cytoplasm</keyword>
<keyword id="KW-0418">Kinase</keyword>
<keyword id="KW-0547">Nucleotide-binding</keyword>
<keyword id="KW-0808">Transferase</keyword>
<feature type="chain" id="PRO_0000164488" description="Uridine kinase">
    <location>
        <begin position="1"/>
        <end position="207"/>
    </location>
</feature>
<feature type="binding site" evidence="1">
    <location>
        <begin position="11"/>
        <end position="18"/>
    </location>
    <ligand>
        <name>ATP</name>
        <dbReference type="ChEBI" id="CHEBI:30616"/>
    </ligand>
</feature>